<comment type="function">
    <text evidence="1">Fluoride-specific ion channel. Important for reducing fluoride concentration in the cell, thus reducing its toxicity.</text>
</comment>
<comment type="catalytic activity">
    <reaction evidence="1">
        <text>fluoride(in) = fluoride(out)</text>
        <dbReference type="Rhea" id="RHEA:76159"/>
        <dbReference type="ChEBI" id="CHEBI:17051"/>
    </reaction>
    <physiologicalReaction direction="left-to-right" evidence="1">
        <dbReference type="Rhea" id="RHEA:76160"/>
    </physiologicalReaction>
</comment>
<comment type="activity regulation">
    <text evidence="1">Na(+) is not transported, but it plays an essential structural role and its presence is essential for fluoride channel function.</text>
</comment>
<comment type="subcellular location">
    <subcellularLocation>
        <location evidence="1">Cell inner membrane</location>
        <topology evidence="1">Multi-pass membrane protein</topology>
    </subcellularLocation>
</comment>
<comment type="similarity">
    <text evidence="1">Belongs to the fluoride channel Fluc/FEX (TC 1.A.43) family.</text>
</comment>
<keyword id="KW-0997">Cell inner membrane</keyword>
<keyword id="KW-1003">Cell membrane</keyword>
<keyword id="KW-0407">Ion channel</keyword>
<keyword id="KW-0406">Ion transport</keyword>
<keyword id="KW-0472">Membrane</keyword>
<keyword id="KW-0479">Metal-binding</keyword>
<keyword id="KW-0915">Sodium</keyword>
<keyword id="KW-0812">Transmembrane</keyword>
<keyword id="KW-1133">Transmembrane helix</keyword>
<keyword id="KW-0813">Transport</keyword>
<reference key="1">
    <citation type="journal article" date="2009" name="PLoS Pathog.">
        <title>Molecular evolutionary consequences of niche restriction in Francisella tularensis, a facultative intracellular pathogen.</title>
        <authorList>
            <person name="Larsson P."/>
            <person name="Elfsmark D."/>
            <person name="Svensson K."/>
            <person name="Wikstroem P."/>
            <person name="Forsman M."/>
            <person name="Brettin T."/>
            <person name="Keim P."/>
            <person name="Johansson A."/>
        </authorList>
    </citation>
    <scope>NUCLEOTIDE SEQUENCE [LARGE SCALE GENOMIC DNA]</scope>
    <source>
        <strain>FSC147</strain>
    </source>
</reference>
<gene>
    <name evidence="1" type="primary">fluC</name>
    <name evidence="1" type="synonym">crcB</name>
    <name type="ordered locus">FTM_1582</name>
</gene>
<dbReference type="EMBL" id="CP000915">
    <property type="protein sequence ID" value="ACD31399.1"/>
    <property type="molecule type" value="Genomic_DNA"/>
</dbReference>
<dbReference type="SMR" id="B2SE35"/>
<dbReference type="KEGG" id="ftm:FTM_1582"/>
<dbReference type="HOGENOM" id="CLU_114342_2_3_6"/>
<dbReference type="GO" id="GO:0005886">
    <property type="term" value="C:plasma membrane"/>
    <property type="evidence" value="ECO:0007669"/>
    <property type="project" value="UniProtKB-SubCell"/>
</dbReference>
<dbReference type="GO" id="GO:0062054">
    <property type="term" value="F:fluoride channel activity"/>
    <property type="evidence" value="ECO:0007669"/>
    <property type="project" value="UniProtKB-UniRule"/>
</dbReference>
<dbReference type="GO" id="GO:0046872">
    <property type="term" value="F:metal ion binding"/>
    <property type="evidence" value="ECO:0007669"/>
    <property type="project" value="UniProtKB-KW"/>
</dbReference>
<dbReference type="GO" id="GO:0140114">
    <property type="term" value="P:cellular detoxification of fluoride"/>
    <property type="evidence" value="ECO:0007669"/>
    <property type="project" value="UniProtKB-UniRule"/>
</dbReference>
<dbReference type="HAMAP" id="MF_00454">
    <property type="entry name" value="FluC"/>
    <property type="match status" value="1"/>
</dbReference>
<dbReference type="InterPro" id="IPR003691">
    <property type="entry name" value="FluC"/>
</dbReference>
<dbReference type="NCBIfam" id="TIGR00494">
    <property type="entry name" value="crcB"/>
    <property type="match status" value="1"/>
</dbReference>
<dbReference type="PANTHER" id="PTHR28259">
    <property type="entry name" value="FLUORIDE EXPORT PROTEIN 1-RELATED"/>
    <property type="match status" value="1"/>
</dbReference>
<dbReference type="PANTHER" id="PTHR28259:SF1">
    <property type="entry name" value="FLUORIDE EXPORT PROTEIN 1-RELATED"/>
    <property type="match status" value="1"/>
</dbReference>
<dbReference type="Pfam" id="PF02537">
    <property type="entry name" value="CRCB"/>
    <property type="match status" value="1"/>
</dbReference>
<evidence type="ECO:0000255" key="1">
    <source>
        <dbReference type="HAMAP-Rule" id="MF_00454"/>
    </source>
</evidence>
<name>FLUC_FRATM</name>
<proteinExistence type="inferred from homology"/>
<sequence length="130" mass="13865">MGLLLLLVGIGGGFGAMARFALTQATASISKQIPLGILLCNIIGSLIIGMMAAFLIETKLFNEDVSAYVRFLLVTGFLGGFTTFSSFSLDILNLLQRGEIFIAIGYIMVSVLASLIAVILGFYIVMGVYK</sequence>
<protein>
    <recommendedName>
        <fullName evidence="1">Fluoride-specific ion channel FluC</fullName>
    </recommendedName>
</protein>
<feature type="chain" id="PRO_1000125132" description="Fluoride-specific ion channel FluC">
    <location>
        <begin position="1"/>
        <end position="130"/>
    </location>
</feature>
<feature type="transmembrane region" description="Helical" evidence="1">
    <location>
        <begin position="2"/>
        <end position="22"/>
    </location>
</feature>
<feature type="transmembrane region" description="Helical" evidence="1">
    <location>
        <begin position="36"/>
        <end position="56"/>
    </location>
</feature>
<feature type="transmembrane region" description="Helical" evidence="1">
    <location>
        <begin position="71"/>
        <end position="91"/>
    </location>
</feature>
<feature type="transmembrane region" description="Helical" evidence="1">
    <location>
        <begin position="100"/>
        <end position="120"/>
    </location>
</feature>
<feature type="binding site" evidence="1">
    <location>
        <position position="79"/>
    </location>
    <ligand>
        <name>Na(+)</name>
        <dbReference type="ChEBI" id="CHEBI:29101"/>
        <note>structural</note>
    </ligand>
</feature>
<feature type="binding site" evidence="1">
    <location>
        <position position="82"/>
    </location>
    <ligand>
        <name>Na(+)</name>
        <dbReference type="ChEBI" id="CHEBI:29101"/>
        <note>structural</note>
    </ligand>
</feature>
<accession>B2SE35</accession>
<organism>
    <name type="scientific">Francisella tularensis subsp. mediasiatica (strain FSC147)</name>
    <dbReference type="NCBI Taxonomy" id="441952"/>
    <lineage>
        <taxon>Bacteria</taxon>
        <taxon>Pseudomonadati</taxon>
        <taxon>Pseudomonadota</taxon>
        <taxon>Gammaproteobacteria</taxon>
        <taxon>Thiotrichales</taxon>
        <taxon>Francisellaceae</taxon>
        <taxon>Francisella</taxon>
    </lineage>
</organism>